<name>ATPD_ECODH</name>
<accession>B1X9W3</accession>
<proteinExistence type="inferred from homology"/>
<keyword id="KW-0066">ATP synthesis</keyword>
<keyword id="KW-0997">Cell inner membrane</keyword>
<keyword id="KW-1003">Cell membrane</keyword>
<keyword id="KW-0139">CF(1)</keyword>
<keyword id="KW-0375">Hydrogen ion transport</keyword>
<keyword id="KW-0406">Ion transport</keyword>
<keyword id="KW-0472">Membrane</keyword>
<keyword id="KW-0813">Transport</keyword>
<dbReference type="EMBL" id="CP000948">
    <property type="protein sequence ID" value="ACB04778.1"/>
    <property type="molecule type" value="Genomic_DNA"/>
</dbReference>
<dbReference type="RefSeq" id="WP_001288587.1">
    <property type="nucleotide sequence ID" value="NC_010473.1"/>
</dbReference>
<dbReference type="SMR" id="B1X9W3"/>
<dbReference type="GeneID" id="93778232"/>
<dbReference type="KEGG" id="ecd:ECDH10B_3922"/>
<dbReference type="HOGENOM" id="CLU_085114_3_0_6"/>
<dbReference type="GO" id="GO:0005886">
    <property type="term" value="C:plasma membrane"/>
    <property type="evidence" value="ECO:0007669"/>
    <property type="project" value="UniProtKB-SubCell"/>
</dbReference>
<dbReference type="GO" id="GO:0045259">
    <property type="term" value="C:proton-transporting ATP synthase complex"/>
    <property type="evidence" value="ECO:0007669"/>
    <property type="project" value="UniProtKB-KW"/>
</dbReference>
<dbReference type="GO" id="GO:0046933">
    <property type="term" value="F:proton-transporting ATP synthase activity, rotational mechanism"/>
    <property type="evidence" value="ECO:0007669"/>
    <property type="project" value="UniProtKB-UniRule"/>
</dbReference>
<dbReference type="FunFam" id="1.10.520.20:FF:000001">
    <property type="entry name" value="ATP synthase subunit delta"/>
    <property type="match status" value="1"/>
</dbReference>
<dbReference type="Gene3D" id="1.10.520.20">
    <property type="entry name" value="N-terminal domain of the delta subunit of the F1F0-ATP synthase"/>
    <property type="match status" value="1"/>
</dbReference>
<dbReference type="HAMAP" id="MF_01416">
    <property type="entry name" value="ATP_synth_delta_bact"/>
    <property type="match status" value="1"/>
</dbReference>
<dbReference type="InterPro" id="IPR026015">
    <property type="entry name" value="ATP_synth_OSCP/delta_N_sf"/>
</dbReference>
<dbReference type="InterPro" id="IPR020781">
    <property type="entry name" value="ATPase_OSCP/d_CS"/>
</dbReference>
<dbReference type="InterPro" id="IPR000711">
    <property type="entry name" value="ATPase_OSCP/dsu"/>
</dbReference>
<dbReference type="NCBIfam" id="TIGR01145">
    <property type="entry name" value="ATP_synt_delta"/>
    <property type="match status" value="1"/>
</dbReference>
<dbReference type="NCBIfam" id="NF004402">
    <property type="entry name" value="PRK05758.2-2"/>
    <property type="match status" value="1"/>
</dbReference>
<dbReference type="NCBIfam" id="NF004404">
    <property type="entry name" value="PRK05758.2-5"/>
    <property type="match status" value="1"/>
</dbReference>
<dbReference type="PANTHER" id="PTHR11910">
    <property type="entry name" value="ATP SYNTHASE DELTA CHAIN"/>
    <property type="match status" value="1"/>
</dbReference>
<dbReference type="Pfam" id="PF00213">
    <property type="entry name" value="OSCP"/>
    <property type="match status" value="1"/>
</dbReference>
<dbReference type="PRINTS" id="PR00125">
    <property type="entry name" value="ATPASEDELTA"/>
</dbReference>
<dbReference type="SUPFAM" id="SSF47928">
    <property type="entry name" value="N-terminal domain of the delta subunit of the F1F0-ATP synthase"/>
    <property type="match status" value="1"/>
</dbReference>
<dbReference type="PROSITE" id="PS00389">
    <property type="entry name" value="ATPASE_DELTA"/>
    <property type="match status" value="1"/>
</dbReference>
<protein>
    <recommendedName>
        <fullName evidence="1">ATP synthase subunit delta</fullName>
    </recommendedName>
    <alternativeName>
        <fullName evidence="1">ATP synthase F(1) sector subunit delta</fullName>
    </alternativeName>
    <alternativeName>
        <fullName evidence="1">F-type ATPase subunit delta</fullName>
        <shortName evidence="1">F-ATPase subunit delta</shortName>
    </alternativeName>
</protein>
<gene>
    <name evidence="1" type="primary">atpH</name>
    <name type="ordered locus">ECDH10B_3922</name>
</gene>
<feature type="chain" id="PRO_0000370972" description="ATP synthase subunit delta">
    <location>
        <begin position="1"/>
        <end position="177"/>
    </location>
</feature>
<sequence>MSEFITVARPYAKAAFDFAVEHQSVERWQDMLAFAAEVTKNEQMAELLSGALAPETLAESFIAVCGEQLDENGQNLIRVMAENGRLNALPDVLEQFIHLRAVSEATAEVDVISAAALSEQQLAKISAAMEKRLSRKVKLNCKIDKSVMAGVIIRAGDMVIDGSVRGRLERLADVLQS</sequence>
<evidence type="ECO:0000255" key="1">
    <source>
        <dbReference type="HAMAP-Rule" id="MF_01416"/>
    </source>
</evidence>
<comment type="function">
    <text evidence="1">F(1)F(0) ATP synthase produces ATP from ADP in the presence of a proton or sodium gradient. F-type ATPases consist of two structural domains, F(1) containing the extramembraneous catalytic core and F(0) containing the membrane proton channel, linked together by a central stalk and a peripheral stalk. During catalysis, ATP synthesis in the catalytic domain of F(1) is coupled via a rotary mechanism of the central stalk subunits to proton translocation.</text>
</comment>
<comment type="function">
    <text evidence="1">This protein is part of the stalk that links CF(0) to CF(1). It either transmits conformational changes from CF(0) to CF(1) or is implicated in proton conduction.</text>
</comment>
<comment type="subunit">
    <text evidence="1">F-type ATPases have 2 components, F(1) - the catalytic core - and F(0) - the membrane proton channel. F(1) has five subunits: alpha(3), beta(3), gamma(1), delta(1), epsilon(1). F(0) has three main subunits: a(1), b(2) and c(10-14). The alpha and beta chains form an alternating ring which encloses part of the gamma chain. F(1) is attached to F(0) by a central stalk formed by the gamma and epsilon chains, while a peripheral stalk is formed by the delta and b chains.</text>
</comment>
<comment type="subcellular location">
    <subcellularLocation>
        <location evidence="1">Cell inner membrane</location>
        <topology evidence="1">Peripheral membrane protein</topology>
    </subcellularLocation>
</comment>
<comment type="similarity">
    <text evidence="1">Belongs to the ATPase delta chain family.</text>
</comment>
<reference key="1">
    <citation type="journal article" date="2008" name="J. Bacteriol.">
        <title>The complete genome sequence of Escherichia coli DH10B: insights into the biology of a laboratory workhorse.</title>
        <authorList>
            <person name="Durfee T."/>
            <person name="Nelson R."/>
            <person name="Baldwin S."/>
            <person name="Plunkett G. III"/>
            <person name="Burland V."/>
            <person name="Mau B."/>
            <person name="Petrosino J.F."/>
            <person name="Qin X."/>
            <person name="Muzny D.M."/>
            <person name="Ayele M."/>
            <person name="Gibbs R.A."/>
            <person name="Csorgo B."/>
            <person name="Posfai G."/>
            <person name="Weinstock G.M."/>
            <person name="Blattner F.R."/>
        </authorList>
    </citation>
    <scope>NUCLEOTIDE SEQUENCE [LARGE SCALE GENOMIC DNA]</scope>
    <source>
        <strain>K12 / DH10B</strain>
    </source>
</reference>
<organism>
    <name type="scientific">Escherichia coli (strain K12 / DH10B)</name>
    <dbReference type="NCBI Taxonomy" id="316385"/>
    <lineage>
        <taxon>Bacteria</taxon>
        <taxon>Pseudomonadati</taxon>
        <taxon>Pseudomonadota</taxon>
        <taxon>Gammaproteobacteria</taxon>
        <taxon>Enterobacterales</taxon>
        <taxon>Enterobacteriaceae</taxon>
        <taxon>Escherichia</taxon>
    </lineage>
</organism>